<organism>
    <name type="scientific">Onion yellows phytoplasma (strain OY-M)</name>
    <dbReference type="NCBI Taxonomy" id="262768"/>
    <lineage>
        <taxon>Bacteria</taxon>
        <taxon>Bacillati</taxon>
        <taxon>Mycoplasmatota</taxon>
        <taxon>Mollicutes</taxon>
        <taxon>Acholeplasmatales</taxon>
        <taxon>Acholeplasmataceae</taxon>
        <taxon>Candidatus Phytoplasma</taxon>
        <taxon>16SrI (Aster yellows group)</taxon>
    </lineage>
</organism>
<name>SECA_ONYPE</name>
<protein>
    <recommendedName>
        <fullName evidence="1">Protein translocase subunit SecA</fullName>
        <ecNumber evidence="1">7.4.2.8</ecNumber>
    </recommendedName>
</protein>
<gene>
    <name evidence="1" type="primary">secA</name>
    <name type="ordered locus">PAM_474</name>
</gene>
<proteinExistence type="inferred from homology"/>
<feature type="chain" id="PRO_0000320878" description="Protein translocase subunit SecA">
    <location>
        <begin position="1"/>
        <end position="835"/>
    </location>
</feature>
<feature type="region of interest" description="Disordered" evidence="2">
    <location>
        <begin position="806"/>
        <end position="835"/>
    </location>
</feature>
<feature type="compositionally biased region" description="Basic residues" evidence="2">
    <location>
        <begin position="820"/>
        <end position="835"/>
    </location>
</feature>
<feature type="binding site" evidence="1">
    <location>
        <position position="85"/>
    </location>
    <ligand>
        <name>ATP</name>
        <dbReference type="ChEBI" id="CHEBI:30616"/>
    </ligand>
</feature>
<feature type="binding site" evidence="1">
    <location>
        <begin position="103"/>
        <end position="107"/>
    </location>
    <ligand>
        <name>ATP</name>
        <dbReference type="ChEBI" id="CHEBI:30616"/>
    </ligand>
</feature>
<feature type="binding site" evidence="1">
    <location>
        <position position="495"/>
    </location>
    <ligand>
        <name>ATP</name>
        <dbReference type="ChEBI" id="CHEBI:30616"/>
    </ligand>
</feature>
<evidence type="ECO:0000255" key="1">
    <source>
        <dbReference type="HAMAP-Rule" id="MF_01382"/>
    </source>
</evidence>
<evidence type="ECO:0000256" key="2">
    <source>
        <dbReference type="SAM" id="MobiDB-lite"/>
    </source>
</evidence>
<reference key="1">
    <citation type="journal article" date="2004" name="Nat. Genet.">
        <title>Reductive evolution suggested from the complete genome sequence of a plant-pathogenic phytoplasma.</title>
        <authorList>
            <person name="Oshima K."/>
            <person name="Kakizawa S."/>
            <person name="Nishigawa H."/>
            <person name="Jung H.-Y."/>
            <person name="Wei W."/>
            <person name="Suzuki S."/>
            <person name="Arashida R."/>
            <person name="Nakata D."/>
            <person name="Miyata S."/>
            <person name="Ugaki M."/>
            <person name="Namba S."/>
        </authorList>
    </citation>
    <scope>NUCLEOTIDE SEQUENCE [LARGE SCALE GENOMIC DNA]</scope>
    <source>
        <strain>OY-M</strain>
    </source>
</reference>
<sequence length="835" mass="95751">MLNFLKKIFNSSKKALRKARTIANKVQNLEAQMALLDDKDFATKTAELKKLFQEGKTLNQLLPEAYALAKEATKRVTGLTPYYVQILGAVILHQGNISEMKTGEGKTLTAIMPAYLNALSGNPVHIVTVNEYLAKREFEGSIGDVFRFLGMTVGLNTKDKDHAQKQQAYLCDILYTTNSELGFDYLRDNMEIEASNLVMKRPYSYAIVDEVDSILIDEARTPLIISQSVKETKNLYKEAQRFVRTLKNRHYLIELETKTIELTEEGITKAENFFQIDNLYNVEHASLLHHVKNALKAAFTMHKDKDYLVDYKDGQVLIIDQFTGRALPGRQFSDGLHQALEAKEGVLIKEETSIGATITYQNFFRLYHKLSGMTGTAKTEEDEFRDIYNMEVIEIPTNVPMIRIDEPDFIFVSLKEKYDALIEEITSRHKKRQPILIGTTTVEVSEIISKKLKKHSIKHEILNAKNHSKEADIIAKAGLKNAVTIATNMAGRGTDIRLGEGVKELGGLAVLGTERHESRRIDNQLRGRAGRQGDPGYSRFFISSEDELAQRFGGTRIEKIISLLQKISDSETKTSSKMVTKFFTKIQKKVESSNFDYRKYLLKYDDILRIQREIIYNQRKEILVSNRVEQIVQDLMQKTLNKAILPHFTNNPTQCQTQTLITFLENKFFPKQTFDLEEVQELCNNPKTNSLDSFQQHLLQKVKXTLQSQKDFFEKDPDKAQYFAKGLKWITLKIIDNYYQRHINDMSSLRQGIGFVSYGQQDSFIEYQKEGQVLFNNMIAKIANDITATILKFSFADSFXTPPKQKVFLNNDSSDDESSKKRRTRKVRTSKKPWN</sequence>
<comment type="function">
    <text evidence="1">Part of the Sec protein translocase complex. Interacts with the SecYEG preprotein conducting channel. Has a central role in coupling the hydrolysis of ATP to the transfer of proteins into and across the cell membrane, serving as an ATP-driven molecular motor driving the stepwise translocation of polypeptide chains across the membrane.</text>
</comment>
<comment type="catalytic activity">
    <reaction evidence="1">
        <text>ATP + H2O + cellular proteinSide 1 = ADP + phosphate + cellular proteinSide 2.</text>
        <dbReference type="EC" id="7.4.2.8"/>
    </reaction>
</comment>
<comment type="subunit">
    <text evidence="1">Monomer and homodimer. Part of the essential Sec protein translocation apparatus which comprises SecA, SecYEG and auxiliary proteins SecDF. Other proteins may also be involved.</text>
</comment>
<comment type="subcellular location">
    <subcellularLocation>
        <location evidence="1">Cell membrane</location>
        <topology evidence="1">Peripheral membrane protein</topology>
        <orientation evidence="1">Cytoplasmic side</orientation>
    </subcellularLocation>
    <subcellularLocation>
        <location evidence="1">Cytoplasm</location>
    </subcellularLocation>
    <text evidence="1">Distribution is 50-50.</text>
</comment>
<comment type="similarity">
    <text evidence="1">Belongs to the SecA family.</text>
</comment>
<dbReference type="EC" id="7.4.2.8" evidence="1"/>
<dbReference type="EMBL" id="AP006628">
    <property type="protein sequence ID" value="BAD04559.1"/>
    <property type="molecule type" value="Genomic_DNA"/>
</dbReference>
<dbReference type="STRING" id="262768.PAM_474"/>
<dbReference type="KEGG" id="poy:PAM_474"/>
<dbReference type="eggNOG" id="COG0653">
    <property type="taxonomic scope" value="Bacteria"/>
</dbReference>
<dbReference type="HOGENOM" id="CLU_005314_3_0_14"/>
<dbReference type="BioCyc" id="OYEL262768:G1G26-559-MONOMER"/>
<dbReference type="Proteomes" id="UP000002523">
    <property type="component" value="Chromosome"/>
</dbReference>
<dbReference type="GO" id="GO:0031522">
    <property type="term" value="C:cell envelope Sec protein transport complex"/>
    <property type="evidence" value="ECO:0007669"/>
    <property type="project" value="TreeGrafter"/>
</dbReference>
<dbReference type="GO" id="GO:0005829">
    <property type="term" value="C:cytosol"/>
    <property type="evidence" value="ECO:0007669"/>
    <property type="project" value="TreeGrafter"/>
</dbReference>
<dbReference type="GO" id="GO:0005886">
    <property type="term" value="C:plasma membrane"/>
    <property type="evidence" value="ECO:0007669"/>
    <property type="project" value="UniProtKB-SubCell"/>
</dbReference>
<dbReference type="GO" id="GO:0005524">
    <property type="term" value="F:ATP binding"/>
    <property type="evidence" value="ECO:0007669"/>
    <property type="project" value="UniProtKB-UniRule"/>
</dbReference>
<dbReference type="GO" id="GO:0008564">
    <property type="term" value="F:protein-exporting ATPase activity"/>
    <property type="evidence" value="ECO:0007669"/>
    <property type="project" value="UniProtKB-EC"/>
</dbReference>
<dbReference type="GO" id="GO:0065002">
    <property type="term" value="P:intracellular protein transmembrane transport"/>
    <property type="evidence" value="ECO:0007669"/>
    <property type="project" value="UniProtKB-UniRule"/>
</dbReference>
<dbReference type="GO" id="GO:0017038">
    <property type="term" value="P:protein import"/>
    <property type="evidence" value="ECO:0007669"/>
    <property type="project" value="InterPro"/>
</dbReference>
<dbReference type="GO" id="GO:0006605">
    <property type="term" value="P:protein targeting"/>
    <property type="evidence" value="ECO:0007669"/>
    <property type="project" value="UniProtKB-UniRule"/>
</dbReference>
<dbReference type="GO" id="GO:0043952">
    <property type="term" value="P:protein transport by the Sec complex"/>
    <property type="evidence" value="ECO:0007669"/>
    <property type="project" value="TreeGrafter"/>
</dbReference>
<dbReference type="CDD" id="cd17928">
    <property type="entry name" value="DEXDc_SecA"/>
    <property type="match status" value="1"/>
</dbReference>
<dbReference type="CDD" id="cd18803">
    <property type="entry name" value="SF2_C_secA"/>
    <property type="match status" value="1"/>
</dbReference>
<dbReference type="FunFam" id="3.40.50.300:FF:000429">
    <property type="entry name" value="Preprotein translocase subunit SecA"/>
    <property type="match status" value="1"/>
</dbReference>
<dbReference type="Gene3D" id="1.10.3060.10">
    <property type="entry name" value="Helical scaffold and wing domains of SecA"/>
    <property type="match status" value="1"/>
</dbReference>
<dbReference type="Gene3D" id="3.40.50.300">
    <property type="entry name" value="P-loop containing nucleotide triphosphate hydrolases"/>
    <property type="match status" value="3"/>
</dbReference>
<dbReference type="Gene3D" id="3.90.1440.10">
    <property type="entry name" value="SecA, preprotein cross-linking domain"/>
    <property type="match status" value="1"/>
</dbReference>
<dbReference type="HAMAP" id="MF_01382">
    <property type="entry name" value="SecA"/>
    <property type="match status" value="1"/>
</dbReference>
<dbReference type="InterPro" id="IPR014001">
    <property type="entry name" value="Helicase_ATP-bd"/>
</dbReference>
<dbReference type="InterPro" id="IPR001650">
    <property type="entry name" value="Helicase_C-like"/>
</dbReference>
<dbReference type="InterPro" id="IPR027417">
    <property type="entry name" value="P-loop_NTPase"/>
</dbReference>
<dbReference type="InterPro" id="IPR000185">
    <property type="entry name" value="SecA"/>
</dbReference>
<dbReference type="InterPro" id="IPR020937">
    <property type="entry name" value="SecA_CS"/>
</dbReference>
<dbReference type="InterPro" id="IPR011115">
    <property type="entry name" value="SecA_DEAD"/>
</dbReference>
<dbReference type="InterPro" id="IPR014018">
    <property type="entry name" value="SecA_motor_DEAD"/>
</dbReference>
<dbReference type="InterPro" id="IPR011130">
    <property type="entry name" value="SecA_preprotein_X-link_dom"/>
</dbReference>
<dbReference type="InterPro" id="IPR044722">
    <property type="entry name" value="SecA_SF2_C"/>
</dbReference>
<dbReference type="InterPro" id="IPR011116">
    <property type="entry name" value="SecA_Wing/Scaffold"/>
</dbReference>
<dbReference type="InterPro" id="IPR036266">
    <property type="entry name" value="SecA_Wing/Scaffold_sf"/>
</dbReference>
<dbReference type="InterPro" id="IPR036670">
    <property type="entry name" value="SecA_X-link_sf"/>
</dbReference>
<dbReference type="NCBIfam" id="NF006630">
    <property type="entry name" value="PRK09200.1"/>
    <property type="match status" value="1"/>
</dbReference>
<dbReference type="NCBIfam" id="TIGR00963">
    <property type="entry name" value="secA"/>
    <property type="match status" value="1"/>
</dbReference>
<dbReference type="PANTHER" id="PTHR30612:SF0">
    <property type="entry name" value="CHLOROPLAST PROTEIN-TRANSPORTING ATPASE"/>
    <property type="match status" value="1"/>
</dbReference>
<dbReference type="PANTHER" id="PTHR30612">
    <property type="entry name" value="SECA INNER MEMBRANE COMPONENT OF SEC PROTEIN SECRETION SYSTEM"/>
    <property type="match status" value="1"/>
</dbReference>
<dbReference type="Pfam" id="PF21090">
    <property type="entry name" value="P-loop_SecA"/>
    <property type="match status" value="1"/>
</dbReference>
<dbReference type="Pfam" id="PF07517">
    <property type="entry name" value="SecA_DEAD"/>
    <property type="match status" value="1"/>
</dbReference>
<dbReference type="Pfam" id="PF01043">
    <property type="entry name" value="SecA_PP_bind"/>
    <property type="match status" value="1"/>
</dbReference>
<dbReference type="Pfam" id="PF07516">
    <property type="entry name" value="SecA_SW"/>
    <property type="match status" value="1"/>
</dbReference>
<dbReference type="PRINTS" id="PR00906">
    <property type="entry name" value="SECA"/>
</dbReference>
<dbReference type="SMART" id="SM00957">
    <property type="entry name" value="SecA_DEAD"/>
    <property type="match status" value="1"/>
</dbReference>
<dbReference type="SMART" id="SM00958">
    <property type="entry name" value="SecA_PP_bind"/>
    <property type="match status" value="1"/>
</dbReference>
<dbReference type="SUPFAM" id="SSF81886">
    <property type="entry name" value="Helical scaffold and wing domains of SecA"/>
    <property type="match status" value="1"/>
</dbReference>
<dbReference type="SUPFAM" id="SSF52540">
    <property type="entry name" value="P-loop containing nucleoside triphosphate hydrolases"/>
    <property type="match status" value="2"/>
</dbReference>
<dbReference type="SUPFAM" id="SSF81767">
    <property type="entry name" value="Pre-protein crosslinking domain of SecA"/>
    <property type="match status" value="1"/>
</dbReference>
<dbReference type="PROSITE" id="PS01312">
    <property type="entry name" value="SECA"/>
    <property type="match status" value="1"/>
</dbReference>
<dbReference type="PROSITE" id="PS51196">
    <property type="entry name" value="SECA_MOTOR_DEAD"/>
    <property type="match status" value="1"/>
</dbReference>
<accession>Q6YQA1</accession>
<keyword id="KW-0067">ATP-binding</keyword>
<keyword id="KW-1003">Cell membrane</keyword>
<keyword id="KW-0963">Cytoplasm</keyword>
<keyword id="KW-0472">Membrane</keyword>
<keyword id="KW-0547">Nucleotide-binding</keyword>
<keyword id="KW-0653">Protein transport</keyword>
<keyword id="KW-1278">Translocase</keyword>
<keyword id="KW-0811">Translocation</keyword>
<keyword id="KW-0813">Transport</keyword>